<organism>
    <name type="scientific">Treponema pallidum (strain Nichols)</name>
    <dbReference type="NCBI Taxonomy" id="243276"/>
    <lineage>
        <taxon>Bacteria</taxon>
        <taxon>Pseudomonadati</taxon>
        <taxon>Spirochaetota</taxon>
        <taxon>Spirochaetia</taxon>
        <taxon>Spirochaetales</taxon>
        <taxon>Treponemataceae</taxon>
        <taxon>Treponema</taxon>
    </lineage>
</organism>
<feature type="chain" id="PRO_0000157251" description="Probable protein-export membrane protein SecG">
    <location>
        <begin position="1"/>
        <end position="133"/>
    </location>
</feature>
<feature type="transmembrane region" description="Helical" evidence="2">
    <location>
        <begin position="3"/>
        <end position="23"/>
    </location>
</feature>
<feature type="transmembrane region" description="Helical" evidence="2">
    <location>
        <begin position="52"/>
        <end position="72"/>
    </location>
</feature>
<gene>
    <name type="primary">secG</name>
    <name type="ordered locus">TP_0536</name>
</gene>
<evidence type="ECO:0000250" key="1"/>
<evidence type="ECO:0000255" key="2"/>
<evidence type="ECO:0000305" key="3"/>
<dbReference type="EMBL" id="AE000520">
    <property type="protein sequence ID" value="AAC65529.1"/>
    <property type="molecule type" value="Genomic_DNA"/>
</dbReference>
<dbReference type="PIR" id="E71311">
    <property type="entry name" value="E71311"/>
</dbReference>
<dbReference type="RefSeq" id="WP_010881983.1">
    <property type="nucleotide sequence ID" value="NC_000919.1"/>
</dbReference>
<dbReference type="SMR" id="O83547"/>
<dbReference type="STRING" id="243276.TP_0536"/>
<dbReference type="EnsemblBacteria" id="AAC65529">
    <property type="protein sequence ID" value="AAC65529"/>
    <property type="gene ID" value="TP_0536"/>
</dbReference>
<dbReference type="KEGG" id="tpa:TP_0536"/>
<dbReference type="eggNOG" id="COG1314">
    <property type="taxonomic scope" value="Bacteria"/>
</dbReference>
<dbReference type="HOGENOM" id="CLU_094156_0_0_12"/>
<dbReference type="Proteomes" id="UP000000811">
    <property type="component" value="Chromosome"/>
</dbReference>
<dbReference type="GO" id="GO:0005886">
    <property type="term" value="C:plasma membrane"/>
    <property type="evidence" value="ECO:0007669"/>
    <property type="project" value="UniProtKB-SubCell"/>
</dbReference>
<dbReference type="GO" id="GO:0015450">
    <property type="term" value="F:protein-transporting ATPase activity"/>
    <property type="evidence" value="ECO:0007669"/>
    <property type="project" value="InterPro"/>
</dbReference>
<dbReference type="GO" id="GO:0065002">
    <property type="term" value="P:intracellular protein transmembrane transport"/>
    <property type="evidence" value="ECO:0007669"/>
    <property type="project" value="TreeGrafter"/>
</dbReference>
<dbReference type="GO" id="GO:0009306">
    <property type="term" value="P:protein secretion"/>
    <property type="evidence" value="ECO:0007669"/>
    <property type="project" value="InterPro"/>
</dbReference>
<dbReference type="GO" id="GO:0043952">
    <property type="term" value="P:protein transport by the Sec complex"/>
    <property type="evidence" value="ECO:0007669"/>
    <property type="project" value="TreeGrafter"/>
</dbReference>
<dbReference type="InterPro" id="IPR004692">
    <property type="entry name" value="SecG"/>
</dbReference>
<dbReference type="NCBIfam" id="TIGR00810">
    <property type="entry name" value="secG"/>
    <property type="match status" value="1"/>
</dbReference>
<dbReference type="PANTHER" id="PTHR34182">
    <property type="entry name" value="PROTEIN-EXPORT MEMBRANE PROTEIN SECG"/>
    <property type="match status" value="1"/>
</dbReference>
<dbReference type="PANTHER" id="PTHR34182:SF1">
    <property type="entry name" value="PROTEIN-EXPORT MEMBRANE PROTEIN SECG"/>
    <property type="match status" value="1"/>
</dbReference>
<dbReference type="Pfam" id="PF03840">
    <property type="entry name" value="SecG"/>
    <property type="match status" value="1"/>
</dbReference>
<sequence length="133" mass="14279">MAVLSVMILSLLVVVCLLVVTLVLLQTEEGDGLGGMFSGGSRSAFGSRSASVLTKTSYVMVGLFFGLTFFLALLNRAPDDTGLQKAAQQKQAETAVEWWKHPPKKVLVLQRLLSLLVLPQEFLGLWGSGSSVP</sequence>
<comment type="function">
    <text evidence="1">Involved in protein export. Participates in an early event of protein translocation (By similarity).</text>
</comment>
<comment type="subcellular location">
    <subcellularLocation>
        <location evidence="1">Cell membrane</location>
        <topology evidence="1">Multi-pass membrane protein</topology>
    </subcellularLocation>
</comment>
<comment type="similarity">
    <text evidence="3">Belongs to the SecG family.</text>
</comment>
<reference key="1">
    <citation type="journal article" date="1998" name="Science">
        <title>Complete genome sequence of Treponema pallidum, the syphilis spirochete.</title>
        <authorList>
            <person name="Fraser C.M."/>
            <person name="Norris S.J."/>
            <person name="Weinstock G.M."/>
            <person name="White O."/>
            <person name="Sutton G.G."/>
            <person name="Dodson R.J."/>
            <person name="Gwinn M.L."/>
            <person name="Hickey E.K."/>
            <person name="Clayton R.A."/>
            <person name="Ketchum K.A."/>
            <person name="Sodergren E."/>
            <person name="Hardham J.M."/>
            <person name="McLeod M.P."/>
            <person name="Salzberg S.L."/>
            <person name="Peterson J.D."/>
            <person name="Khalak H.G."/>
            <person name="Richardson D.L."/>
            <person name="Howell J.K."/>
            <person name="Chidambaram M."/>
            <person name="Utterback T.R."/>
            <person name="McDonald L.A."/>
            <person name="Artiach P."/>
            <person name="Bowman C."/>
            <person name="Cotton M.D."/>
            <person name="Fujii C."/>
            <person name="Garland S.A."/>
            <person name="Hatch B."/>
            <person name="Horst K."/>
            <person name="Roberts K.M."/>
            <person name="Sandusky M."/>
            <person name="Weidman J.F."/>
            <person name="Smith H.O."/>
            <person name="Venter J.C."/>
        </authorList>
    </citation>
    <scope>NUCLEOTIDE SEQUENCE [LARGE SCALE GENOMIC DNA]</scope>
    <source>
        <strain>Nichols</strain>
    </source>
</reference>
<accession>O83547</accession>
<protein>
    <recommendedName>
        <fullName>Probable protein-export membrane protein SecG</fullName>
    </recommendedName>
</protein>
<name>SECG_TREPA</name>
<keyword id="KW-1003">Cell membrane</keyword>
<keyword id="KW-0472">Membrane</keyword>
<keyword id="KW-0653">Protein transport</keyword>
<keyword id="KW-1185">Reference proteome</keyword>
<keyword id="KW-0811">Translocation</keyword>
<keyword id="KW-0812">Transmembrane</keyword>
<keyword id="KW-1133">Transmembrane helix</keyword>
<keyword id="KW-0813">Transport</keyword>
<proteinExistence type="inferred from homology"/>